<feature type="chain" id="PRO_1000058566" description="DNA repair protein RecO">
    <location>
        <begin position="1"/>
        <end position="238"/>
    </location>
</feature>
<gene>
    <name evidence="1" type="primary">recO</name>
    <name type="ordered locus">HCH_01803</name>
</gene>
<reference key="1">
    <citation type="journal article" date="2005" name="Nucleic Acids Res.">
        <title>Genomic blueprint of Hahella chejuensis, a marine microbe producing an algicidal agent.</title>
        <authorList>
            <person name="Jeong H."/>
            <person name="Yim J.H."/>
            <person name="Lee C."/>
            <person name="Choi S.-H."/>
            <person name="Park Y.K."/>
            <person name="Yoon S.H."/>
            <person name="Hur C.-G."/>
            <person name="Kang H.-Y."/>
            <person name="Kim D."/>
            <person name="Lee H.H."/>
            <person name="Park K.H."/>
            <person name="Park S.-H."/>
            <person name="Park H.-S."/>
            <person name="Lee H.K."/>
            <person name="Oh T.K."/>
            <person name="Kim J.F."/>
        </authorList>
    </citation>
    <scope>NUCLEOTIDE SEQUENCE [LARGE SCALE GENOMIC DNA]</scope>
    <source>
        <strain>KCTC 2396</strain>
    </source>
</reference>
<accession>Q2SL30</accession>
<dbReference type="EMBL" id="CP000155">
    <property type="protein sequence ID" value="ABC28644.1"/>
    <property type="molecule type" value="Genomic_DNA"/>
</dbReference>
<dbReference type="RefSeq" id="WP_011395716.1">
    <property type="nucleotide sequence ID" value="NC_007645.1"/>
</dbReference>
<dbReference type="SMR" id="Q2SL30"/>
<dbReference type="STRING" id="349521.HCH_01803"/>
<dbReference type="KEGG" id="hch:HCH_01803"/>
<dbReference type="eggNOG" id="COG1381">
    <property type="taxonomic scope" value="Bacteria"/>
</dbReference>
<dbReference type="HOGENOM" id="CLU_066645_1_0_6"/>
<dbReference type="OrthoDB" id="9804792at2"/>
<dbReference type="Proteomes" id="UP000000238">
    <property type="component" value="Chromosome"/>
</dbReference>
<dbReference type="GO" id="GO:0043590">
    <property type="term" value="C:bacterial nucleoid"/>
    <property type="evidence" value="ECO:0007669"/>
    <property type="project" value="TreeGrafter"/>
</dbReference>
<dbReference type="GO" id="GO:0006310">
    <property type="term" value="P:DNA recombination"/>
    <property type="evidence" value="ECO:0007669"/>
    <property type="project" value="UniProtKB-UniRule"/>
</dbReference>
<dbReference type="GO" id="GO:0006302">
    <property type="term" value="P:double-strand break repair"/>
    <property type="evidence" value="ECO:0007669"/>
    <property type="project" value="TreeGrafter"/>
</dbReference>
<dbReference type="Gene3D" id="2.40.50.140">
    <property type="entry name" value="Nucleic acid-binding proteins"/>
    <property type="match status" value="1"/>
</dbReference>
<dbReference type="Gene3D" id="1.20.1440.120">
    <property type="entry name" value="Recombination protein O, C-terminal domain"/>
    <property type="match status" value="1"/>
</dbReference>
<dbReference type="HAMAP" id="MF_00201">
    <property type="entry name" value="RecO"/>
    <property type="match status" value="1"/>
</dbReference>
<dbReference type="InterPro" id="IPR022572">
    <property type="entry name" value="DNA_rep/recomb_RecO_N"/>
</dbReference>
<dbReference type="InterPro" id="IPR012340">
    <property type="entry name" value="NA-bd_OB-fold"/>
</dbReference>
<dbReference type="InterPro" id="IPR003717">
    <property type="entry name" value="RecO"/>
</dbReference>
<dbReference type="InterPro" id="IPR042242">
    <property type="entry name" value="RecO_C"/>
</dbReference>
<dbReference type="NCBIfam" id="TIGR00613">
    <property type="entry name" value="reco"/>
    <property type="match status" value="1"/>
</dbReference>
<dbReference type="PANTHER" id="PTHR33991">
    <property type="entry name" value="DNA REPAIR PROTEIN RECO"/>
    <property type="match status" value="1"/>
</dbReference>
<dbReference type="PANTHER" id="PTHR33991:SF1">
    <property type="entry name" value="DNA REPAIR PROTEIN RECO"/>
    <property type="match status" value="1"/>
</dbReference>
<dbReference type="Pfam" id="PF02565">
    <property type="entry name" value="RecO_C"/>
    <property type="match status" value="1"/>
</dbReference>
<dbReference type="Pfam" id="PF11967">
    <property type="entry name" value="RecO_N"/>
    <property type="match status" value="1"/>
</dbReference>
<dbReference type="SUPFAM" id="SSF50249">
    <property type="entry name" value="Nucleic acid-binding proteins"/>
    <property type="match status" value="1"/>
</dbReference>
<organism>
    <name type="scientific">Hahella chejuensis (strain KCTC 2396)</name>
    <dbReference type="NCBI Taxonomy" id="349521"/>
    <lineage>
        <taxon>Bacteria</taxon>
        <taxon>Pseudomonadati</taxon>
        <taxon>Pseudomonadota</taxon>
        <taxon>Gammaproteobacteria</taxon>
        <taxon>Oceanospirillales</taxon>
        <taxon>Hahellaceae</taxon>
        <taxon>Hahella</taxon>
    </lineage>
</organism>
<evidence type="ECO:0000255" key="1">
    <source>
        <dbReference type="HAMAP-Rule" id="MF_00201"/>
    </source>
</evidence>
<protein>
    <recommendedName>
        <fullName evidence="1">DNA repair protein RecO</fullName>
    </recommendedName>
    <alternativeName>
        <fullName evidence="1">Recombination protein O</fullName>
    </alternativeName>
</protein>
<sequence length="238" mass="26238">MHRVSLQAAYVLHSRPYRESSYIVDLITEADGKASAVLKGGGRRKGVPGTLQPFTELEVELGGRGELKSLIRYETTNIRYPLAGAALYAGLYLNELLVKLLQPLEGCRKVFDAYKSSLTFLSLPQPNLEPGIRELEFALLNELGFGVDFCVESATGDIVKNNIAYYFSLTEGVSRTPEPCSVVIEGHHLIAIAGRDWSVPGSLSAAKRLTRRCLDELLGGRPLHSRELMRSYLKLTKG</sequence>
<keyword id="KW-0227">DNA damage</keyword>
<keyword id="KW-0233">DNA recombination</keyword>
<keyword id="KW-0234">DNA repair</keyword>
<keyword id="KW-1185">Reference proteome</keyword>
<comment type="function">
    <text evidence="1">Involved in DNA repair and RecF pathway recombination.</text>
</comment>
<comment type="similarity">
    <text evidence="1">Belongs to the RecO family.</text>
</comment>
<proteinExistence type="inferred from homology"/>
<name>RECO_HAHCH</name>